<accession>A9ABN1</accession>
<evidence type="ECO:0000255" key="1">
    <source>
        <dbReference type="HAMAP-Rule" id="MF_00415"/>
    </source>
</evidence>
<comment type="function">
    <text evidence="1">Assembles around the rod to form the L-ring and probably protects the motor/basal body from shearing forces during rotation.</text>
</comment>
<comment type="subunit">
    <text evidence="1">The basal body constitutes a major portion of the flagellar organelle and consists of four rings (L,P,S, and M) mounted on a central rod.</text>
</comment>
<comment type="subcellular location">
    <subcellularLocation>
        <location evidence="1">Cell outer membrane</location>
        <topology evidence="1">Lipid-anchor</topology>
    </subcellularLocation>
    <subcellularLocation>
        <location evidence="1">Bacterial flagellum basal body</location>
    </subcellularLocation>
</comment>
<comment type="similarity">
    <text evidence="1">Belongs to the FlgH family.</text>
</comment>
<keyword id="KW-0975">Bacterial flagellum</keyword>
<keyword id="KW-0998">Cell outer membrane</keyword>
<keyword id="KW-0449">Lipoprotein</keyword>
<keyword id="KW-0472">Membrane</keyword>
<keyword id="KW-0564">Palmitate</keyword>
<keyword id="KW-1185">Reference proteome</keyword>
<keyword id="KW-0732">Signal</keyword>
<sequence>MKQVRLLPSAAVRAACALAAAALAGCAQIPREPIVQQPMTAQPPLPVSMQAPGSIFNPGYAGRPLFEDQRPRNIGDILTIVIAENINATKSSGANTNRQGNTDFNVPTAGFLGGLFSKANLSAAGTNKFAATGGASAANTFNGTITVTVTNVLPNGNLVVSGEKQMLINQGNEFVRFSGVVNPNTISGSNSVYSTQVADARIEYSAKGYINEAETMGWLQRFFLNIAPW</sequence>
<dbReference type="EMBL" id="CP000868">
    <property type="protein sequence ID" value="ABX16698.1"/>
    <property type="molecule type" value="Genomic_DNA"/>
</dbReference>
<dbReference type="EMBL" id="AP009385">
    <property type="protein sequence ID" value="BAG42193.1"/>
    <property type="molecule type" value="Genomic_DNA"/>
</dbReference>
<dbReference type="RefSeq" id="WP_006412589.1">
    <property type="nucleotide sequence ID" value="NC_010084.1"/>
</dbReference>
<dbReference type="SMR" id="A9ABN1"/>
<dbReference type="STRING" id="395019.BMULJ_00218"/>
<dbReference type="KEGG" id="bmj:BMULJ_00218"/>
<dbReference type="KEGG" id="bmu:Bmul_3014"/>
<dbReference type="eggNOG" id="COG2063">
    <property type="taxonomic scope" value="Bacteria"/>
</dbReference>
<dbReference type="HOGENOM" id="CLU_069313_0_0_4"/>
<dbReference type="Proteomes" id="UP000008815">
    <property type="component" value="Chromosome 1"/>
</dbReference>
<dbReference type="GO" id="GO:0009427">
    <property type="term" value="C:bacterial-type flagellum basal body, distal rod, L ring"/>
    <property type="evidence" value="ECO:0007669"/>
    <property type="project" value="InterPro"/>
</dbReference>
<dbReference type="GO" id="GO:0009279">
    <property type="term" value="C:cell outer membrane"/>
    <property type="evidence" value="ECO:0007669"/>
    <property type="project" value="UniProtKB-SubCell"/>
</dbReference>
<dbReference type="GO" id="GO:0003774">
    <property type="term" value="F:cytoskeletal motor activity"/>
    <property type="evidence" value="ECO:0007669"/>
    <property type="project" value="InterPro"/>
</dbReference>
<dbReference type="GO" id="GO:0071973">
    <property type="term" value="P:bacterial-type flagellum-dependent cell motility"/>
    <property type="evidence" value="ECO:0007669"/>
    <property type="project" value="InterPro"/>
</dbReference>
<dbReference type="HAMAP" id="MF_00415">
    <property type="entry name" value="FlgH"/>
    <property type="match status" value="1"/>
</dbReference>
<dbReference type="InterPro" id="IPR000527">
    <property type="entry name" value="Flag_Lring"/>
</dbReference>
<dbReference type="NCBIfam" id="NF009337">
    <property type="entry name" value="PRK12697.1"/>
    <property type="match status" value="1"/>
</dbReference>
<dbReference type="PANTHER" id="PTHR34933">
    <property type="entry name" value="FLAGELLAR L-RING PROTEIN"/>
    <property type="match status" value="1"/>
</dbReference>
<dbReference type="PANTHER" id="PTHR34933:SF3">
    <property type="entry name" value="FLAGELLAR L-RING PROTEIN"/>
    <property type="match status" value="1"/>
</dbReference>
<dbReference type="Pfam" id="PF02107">
    <property type="entry name" value="FlgH"/>
    <property type="match status" value="1"/>
</dbReference>
<dbReference type="PRINTS" id="PR01008">
    <property type="entry name" value="FLGLRINGFLGH"/>
</dbReference>
<dbReference type="PROSITE" id="PS51257">
    <property type="entry name" value="PROKAR_LIPOPROTEIN"/>
    <property type="match status" value="1"/>
</dbReference>
<name>FLGH_BURM1</name>
<proteinExistence type="inferred from homology"/>
<gene>
    <name evidence="1" type="primary">flgH</name>
    <name type="ordered locus">Bmul_3014</name>
    <name type="ordered locus">BMULJ_00218</name>
</gene>
<feature type="signal peptide" evidence="1">
    <location>
        <begin position="1"/>
        <end position="25"/>
    </location>
</feature>
<feature type="chain" id="PRO_5000284878" description="Flagellar L-ring protein">
    <location>
        <begin position="26"/>
        <end position="229"/>
    </location>
</feature>
<feature type="lipid moiety-binding region" description="N-palmitoyl cysteine" evidence="1">
    <location>
        <position position="26"/>
    </location>
</feature>
<feature type="lipid moiety-binding region" description="S-diacylglycerol cysteine" evidence="1">
    <location>
        <position position="26"/>
    </location>
</feature>
<protein>
    <recommendedName>
        <fullName evidence="1">Flagellar L-ring protein</fullName>
    </recommendedName>
    <alternativeName>
        <fullName evidence="1">Basal body L-ring protein</fullName>
    </alternativeName>
</protein>
<organism>
    <name type="scientific">Burkholderia multivorans (strain ATCC 17616 / 249)</name>
    <dbReference type="NCBI Taxonomy" id="395019"/>
    <lineage>
        <taxon>Bacteria</taxon>
        <taxon>Pseudomonadati</taxon>
        <taxon>Pseudomonadota</taxon>
        <taxon>Betaproteobacteria</taxon>
        <taxon>Burkholderiales</taxon>
        <taxon>Burkholderiaceae</taxon>
        <taxon>Burkholderia</taxon>
        <taxon>Burkholderia cepacia complex</taxon>
    </lineage>
</organism>
<reference key="1">
    <citation type="submission" date="2007-10" db="EMBL/GenBank/DDBJ databases">
        <title>Complete sequence of chromosome 1 of Burkholderia multivorans ATCC 17616.</title>
        <authorList>
            <person name="Copeland A."/>
            <person name="Lucas S."/>
            <person name="Lapidus A."/>
            <person name="Barry K."/>
            <person name="Glavina del Rio T."/>
            <person name="Dalin E."/>
            <person name="Tice H."/>
            <person name="Pitluck S."/>
            <person name="Chain P."/>
            <person name="Malfatti S."/>
            <person name="Shin M."/>
            <person name="Vergez L."/>
            <person name="Schmutz J."/>
            <person name="Larimer F."/>
            <person name="Land M."/>
            <person name="Hauser L."/>
            <person name="Kyrpides N."/>
            <person name="Kim E."/>
            <person name="Tiedje J."/>
            <person name="Richardson P."/>
        </authorList>
    </citation>
    <scope>NUCLEOTIDE SEQUENCE [LARGE SCALE GENOMIC DNA]</scope>
    <source>
        <strain>ATCC 17616 / 249</strain>
    </source>
</reference>
<reference key="2">
    <citation type="submission" date="2007-04" db="EMBL/GenBank/DDBJ databases">
        <title>Complete genome sequence of Burkholderia multivorans ATCC 17616.</title>
        <authorList>
            <person name="Ohtsubo Y."/>
            <person name="Yamashita A."/>
            <person name="Kurokawa K."/>
            <person name="Takami H."/>
            <person name="Yuhara S."/>
            <person name="Nishiyama E."/>
            <person name="Endo R."/>
            <person name="Miyazaki R."/>
            <person name="Ono A."/>
            <person name="Yano K."/>
            <person name="Ito M."/>
            <person name="Sota M."/>
            <person name="Yuji N."/>
            <person name="Hattori M."/>
            <person name="Tsuda M."/>
        </authorList>
    </citation>
    <scope>NUCLEOTIDE SEQUENCE [LARGE SCALE GENOMIC DNA]</scope>
    <source>
        <strain>ATCC 17616 / 249</strain>
    </source>
</reference>